<reference key="1">
    <citation type="journal article" date="2009" name="J. Bacteriol.">
        <title>Genomic sequencing reveals regulatory mutations and recombinational events in the widely used MC4100 lineage of Escherichia coli K-12.</title>
        <authorList>
            <person name="Ferenci T."/>
            <person name="Zhou Z."/>
            <person name="Betteridge T."/>
            <person name="Ren Y."/>
            <person name="Liu Y."/>
            <person name="Feng L."/>
            <person name="Reeves P.R."/>
            <person name="Wang L."/>
        </authorList>
    </citation>
    <scope>NUCLEOTIDE SEQUENCE [LARGE SCALE GENOMIC DNA]</scope>
    <source>
        <strain>K12 / MC4100 / BW2952</strain>
    </source>
</reference>
<protein>
    <recommendedName>
        <fullName evidence="1">HTH-type transcriptional regulator MurR</fullName>
    </recommendedName>
    <alternativeName>
        <fullName evidence="1">MurPQ operon repressor</fullName>
    </alternativeName>
</protein>
<dbReference type="EMBL" id="CP001396">
    <property type="protein sequence ID" value="ACR64278.1"/>
    <property type="molecule type" value="Genomic_DNA"/>
</dbReference>
<dbReference type="RefSeq" id="WP_000966470.1">
    <property type="nucleotide sequence ID" value="NC_012759.1"/>
</dbReference>
<dbReference type="SMR" id="C4ZVV8"/>
<dbReference type="KEGG" id="ebw:BWG_2189"/>
<dbReference type="HOGENOM" id="CLU_055769_0_2_6"/>
<dbReference type="UniPathway" id="UPA00342"/>
<dbReference type="GO" id="GO:0097367">
    <property type="term" value="F:carbohydrate derivative binding"/>
    <property type="evidence" value="ECO:0007669"/>
    <property type="project" value="InterPro"/>
</dbReference>
<dbReference type="GO" id="GO:0003677">
    <property type="term" value="F:DNA binding"/>
    <property type="evidence" value="ECO:0007669"/>
    <property type="project" value="UniProtKB-KW"/>
</dbReference>
<dbReference type="GO" id="GO:0003700">
    <property type="term" value="F:DNA-binding transcription factor activity"/>
    <property type="evidence" value="ECO:0007669"/>
    <property type="project" value="UniProtKB-UniRule"/>
</dbReference>
<dbReference type="GO" id="GO:1901135">
    <property type="term" value="P:carbohydrate derivative metabolic process"/>
    <property type="evidence" value="ECO:0007669"/>
    <property type="project" value="InterPro"/>
</dbReference>
<dbReference type="GO" id="GO:0097173">
    <property type="term" value="P:N-acetylmuramic acid catabolic process"/>
    <property type="evidence" value="ECO:0007669"/>
    <property type="project" value="UniProtKB-UniPathway"/>
</dbReference>
<dbReference type="GO" id="GO:0045892">
    <property type="term" value="P:negative regulation of DNA-templated transcription"/>
    <property type="evidence" value="ECO:0007669"/>
    <property type="project" value="UniProtKB-UniRule"/>
</dbReference>
<dbReference type="GO" id="GO:0043470">
    <property type="term" value="P:regulation of carbohydrate catabolic process"/>
    <property type="evidence" value="ECO:0007669"/>
    <property type="project" value="UniProtKB-UniRule"/>
</dbReference>
<dbReference type="CDD" id="cd05013">
    <property type="entry name" value="SIS_RpiR"/>
    <property type="match status" value="1"/>
</dbReference>
<dbReference type="FunFam" id="3.40.50.10490:FF:000028">
    <property type="entry name" value="HTH-type transcriptional regulator MurR"/>
    <property type="match status" value="1"/>
</dbReference>
<dbReference type="Gene3D" id="3.40.50.10490">
    <property type="entry name" value="Glucose-6-phosphate isomerase like protein, domain 1"/>
    <property type="match status" value="1"/>
</dbReference>
<dbReference type="Gene3D" id="1.10.10.10">
    <property type="entry name" value="Winged helix-like DNA-binding domain superfamily/Winged helix DNA-binding domain"/>
    <property type="match status" value="1"/>
</dbReference>
<dbReference type="HAMAP" id="MF_02108">
    <property type="entry name" value="HTH_type_MurR"/>
    <property type="match status" value="1"/>
</dbReference>
<dbReference type="InterPro" id="IPR009057">
    <property type="entry name" value="Homeodomain-like_sf"/>
</dbReference>
<dbReference type="InterPro" id="IPR000281">
    <property type="entry name" value="HTH_RpiR"/>
</dbReference>
<dbReference type="InterPro" id="IPR047640">
    <property type="entry name" value="RpiR-like"/>
</dbReference>
<dbReference type="InterPro" id="IPR035472">
    <property type="entry name" value="RpiR-like_SIS"/>
</dbReference>
<dbReference type="InterPro" id="IPR001347">
    <property type="entry name" value="SIS_dom"/>
</dbReference>
<dbReference type="InterPro" id="IPR046348">
    <property type="entry name" value="SIS_dom_sf"/>
</dbReference>
<dbReference type="InterPro" id="IPR022821">
    <property type="entry name" value="Tscrpt_reg_HTH_MurR"/>
</dbReference>
<dbReference type="InterPro" id="IPR036388">
    <property type="entry name" value="WH-like_DNA-bd_sf"/>
</dbReference>
<dbReference type="NCBIfam" id="NF012026">
    <property type="entry name" value="PRK15482.1"/>
    <property type="match status" value="1"/>
</dbReference>
<dbReference type="PANTHER" id="PTHR30514">
    <property type="entry name" value="GLUCOKINASE"/>
    <property type="match status" value="1"/>
</dbReference>
<dbReference type="PANTHER" id="PTHR30514:SF17">
    <property type="entry name" value="HTH-TYPE TRANSCRIPTIONAL REGULATOR MURR"/>
    <property type="match status" value="1"/>
</dbReference>
<dbReference type="Pfam" id="PF01418">
    <property type="entry name" value="HTH_6"/>
    <property type="match status" value="1"/>
</dbReference>
<dbReference type="Pfam" id="PF01380">
    <property type="entry name" value="SIS"/>
    <property type="match status" value="1"/>
</dbReference>
<dbReference type="SUPFAM" id="SSF46689">
    <property type="entry name" value="Homeodomain-like"/>
    <property type="match status" value="1"/>
</dbReference>
<dbReference type="SUPFAM" id="SSF53697">
    <property type="entry name" value="SIS domain"/>
    <property type="match status" value="1"/>
</dbReference>
<dbReference type="PROSITE" id="PS51071">
    <property type="entry name" value="HTH_RPIR"/>
    <property type="match status" value="1"/>
</dbReference>
<dbReference type="PROSITE" id="PS51464">
    <property type="entry name" value="SIS"/>
    <property type="match status" value="1"/>
</dbReference>
<sequence length="285" mass="31192">MLYLTKISNAGSEFTENEQKIADFLQANVSELQSVSSRQMAKQLGISQSSIVKFAQKLGAQGFTELRMALIGEYSASREKTNATALHLHSSITSDDSLEVIARKLNREKELALEQTCALLDYARLQKIIEVISKAPFIQITGLGGSALVGRDLSFKLMKIGYRVACEADTHVQATVSQALKKGDVQIAISYSGSKKEIVLCAEAARKQGATVIAITSLTDSPLRRLAHFTLDTVSGETEWRSSSMSTRTAQNSVTDLLFVGLVQLNDVESLKMIQRSSELTQRLK</sequence>
<accession>C4ZVV8</accession>
<evidence type="ECO:0000255" key="1">
    <source>
        <dbReference type="HAMAP-Rule" id="MF_02108"/>
    </source>
</evidence>
<proteinExistence type="inferred from homology"/>
<gene>
    <name evidence="1" type="primary">murR</name>
    <name type="ordered locus">BWG_2189</name>
</gene>
<organism>
    <name type="scientific">Escherichia coli (strain K12 / MC4100 / BW2952)</name>
    <dbReference type="NCBI Taxonomy" id="595496"/>
    <lineage>
        <taxon>Bacteria</taxon>
        <taxon>Pseudomonadati</taxon>
        <taxon>Pseudomonadota</taxon>
        <taxon>Gammaproteobacteria</taxon>
        <taxon>Enterobacterales</taxon>
        <taxon>Enterobacteriaceae</taxon>
        <taxon>Escherichia</taxon>
    </lineage>
</organism>
<comment type="function">
    <text evidence="1">Represses the expression of the murPQ operon involved in the uptake and degradation of N-acetylmuramic acid (MurNAc). Binds to two adjacent inverted repeats within the operator region. MurNAc 6-phosphate, the substrate of MurQ, is the specific inducer that weakens binding of MurR to the operator.</text>
</comment>
<comment type="pathway">
    <text>Amino-sugar metabolism; N-acetylmuramate degradation [regulation].</text>
</comment>
<comment type="subunit">
    <text evidence="1">Homotetramer.</text>
</comment>
<name>MURR_ECOBW</name>
<keyword id="KW-0119">Carbohydrate metabolism</keyword>
<keyword id="KW-0238">DNA-binding</keyword>
<keyword id="KW-0678">Repressor</keyword>
<keyword id="KW-0804">Transcription</keyword>
<keyword id="KW-0805">Transcription regulation</keyword>
<feature type="chain" id="PRO_0000387757" description="HTH-type transcriptional regulator MurR">
    <location>
        <begin position="1"/>
        <end position="285"/>
    </location>
</feature>
<feature type="domain" description="HTH rpiR-type" evidence="1">
    <location>
        <begin position="1"/>
        <end position="77"/>
    </location>
</feature>
<feature type="domain" description="SIS" evidence="1">
    <location>
        <begin position="128"/>
        <end position="268"/>
    </location>
</feature>
<feature type="DNA-binding region" description="H-T-H motif" evidence="1">
    <location>
        <begin position="37"/>
        <end position="56"/>
    </location>
</feature>